<organism>
    <name type="scientific">Chloroherpeton thalassium (strain ATCC 35110 / GB-78)</name>
    <dbReference type="NCBI Taxonomy" id="517418"/>
    <lineage>
        <taxon>Bacteria</taxon>
        <taxon>Pseudomonadati</taxon>
        <taxon>Chlorobiota</taxon>
        <taxon>Chlorobiia</taxon>
        <taxon>Chlorobiales</taxon>
        <taxon>Chloroherpetonaceae</taxon>
        <taxon>Chloroherpeton</taxon>
    </lineage>
</organism>
<reference key="1">
    <citation type="submission" date="2008-06" db="EMBL/GenBank/DDBJ databases">
        <title>Complete sequence of Chloroherpeton thalassium ATCC 35110.</title>
        <authorList>
            <consortium name="US DOE Joint Genome Institute"/>
            <person name="Lucas S."/>
            <person name="Copeland A."/>
            <person name="Lapidus A."/>
            <person name="Glavina del Rio T."/>
            <person name="Dalin E."/>
            <person name="Tice H."/>
            <person name="Bruce D."/>
            <person name="Goodwin L."/>
            <person name="Pitluck S."/>
            <person name="Schmutz J."/>
            <person name="Larimer F."/>
            <person name="Land M."/>
            <person name="Hauser L."/>
            <person name="Kyrpides N."/>
            <person name="Mikhailova N."/>
            <person name="Liu Z."/>
            <person name="Li T."/>
            <person name="Zhao F."/>
            <person name="Overmann J."/>
            <person name="Bryant D.A."/>
            <person name="Richardson P."/>
        </authorList>
    </citation>
    <scope>NUCLEOTIDE SEQUENCE [LARGE SCALE GENOMIC DNA]</scope>
    <source>
        <strain>ATCC 35110 / GB-78</strain>
    </source>
</reference>
<dbReference type="EC" id="7.4.2.8" evidence="1"/>
<dbReference type="EMBL" id="CP001100">
    <property type="protein sequence ID" value="ACF14982.1"/>
    <property type="molecule type" value="Genomic_DNA"/>
</dbReference>
<dbReference type="RefSeq" id="WP_012501064.1">
    <property type="nucleotide sequence ID" value="NC_011026.1"/>
</dbReference>
<dbReference type="SMR" id="B3QXR7"/>
<dbReference type="STRING" id="517418.Ctha_2533"/>
<dbReference type="KEGG" id="cts:Ctha_2533"/>
<dbReference type="eggNOG" id="COG0653">
    <property type="taxonomic scope" value="Bacteria"/>
</dbReference>
<dbReference type="HOGENOM" id="CLU_005314_3_0_10"/>
<dbReference type="OrthoDB" id="9805579at2"/>
<dbReference type="Proteomes" id="UP000001208">
    <property type="component" value="Chromosome"/>
</dbReference>
<dbReference type="GO" id="GO:0031522">
    <property type="term" value="C:cell envelope Sec protein transport complex"/>
    <property type="evidence" value="ECO:0007669"/>
    <property type="project" value="TreeGrafter"/>
</dbReference>
<dbReference type="GO" id="GO:0005829">
    <property type="term" value="C:cytosol"/>
    <property type="evidence" value="ECO:0007669"/>
    <property type="project" value="TreeGrafter"/>
</dbReference>
<dbReference type="GO" id="GO:0005886">
    <property type="term" value="C:plasma membrane"/>
    <property type="evidence" value="ECO:0007669"/>
    <property type="project" value="UniProtKB-SubCell"/>
</dbReference>
<dbReference type="GO" id="GO:0005524">
    <property type="term" value="F:ATP binding"/>
    <property type="evidence" value="ECO:0007669"/>
    <property type="project" value="UniProtKB-UniRule"/>
</dbReference>
<dbReference type="GO" id="GO:0046872">
    <property type="term" value="F:metal ion binding"/>
    <property type="evidence" value="ECO:0007669"/>
    <property type="project" value="UniProtKB-KW"/>
</dbReference>
<dbReference type="GO" id="GO:0008564">
    <property type="term" value="F:protein-exporting ATPase activity"/>
    <property type="evidence" value="ECO:0007669"/>
    <property type="project" value="UniProtKB-EC"/>
</dbReference>
<dbReference type="GO" id="GO:0065002">
    <property type="term" value="P:intracellular protein transmembrane transport"/>
    <property type="evidence" value="ECO:0007669"/>
    <property type="project" value="UniProtKB-UniRule"/>
</dbReference>
<dbReference type="GO" id="GO:0017038">
    <property type="term" value="P:protein import"/>
    <property type="evidence" value="ECO:0007669"/>
    <property type="project" value="InterPro"/>
</dbReference>
<dbReference type="GO" id="GO:0006605">
    <property type="term" value="P:protein targeting"/>
    <property type="evidence" value="ECO:0007669"/>
    <property type="project" value="UniProtKB-UniRule"/>
</dbReference>
<dbReference type="GO" id="GO:0043952">
    <property type="term" value="P:protein transport by the Sec complex"/>
    <property type="evidence" value="ECO:0007669"/>
    <property type="project" value="TreeGrafter"/>
</dbReference>
<dbReference type="CDD" id="cd17928">
    <property type="entry name" value="DEXDc_SecA"/>
    <property type="match status" value="1"/>
</dbReference>
<dbReference type="CDD" id="cd18803">
    <property type="entry name" value="SF2_C_secA"/>
    <property type="match status" value="1"/>
</dbReference>
<dbReference type="FunFam" id="3.40.50.300:FF:000246">
    <property type="entry name" value="Preprotein translocase subunit SecA"/>
    <property type="match status" value="1"/>
</dbReference>
<dbReference type="FunFam" id="3.40.50.300:FF:000694">
    <property type="entry name" value="Preprotein translocase subunit SecA"/>
    <property type="match status" value="1"/>
</dbReference>
<dbReference type="Gene3D" id="3.10.450.50">
    <property type="match status" value="1"/>
</dbReference>
<dbReference type="Gene3D" id="1.10.3060.10">
    <property type="entry name" value="Helical scaffold and wing domains of SecA"/>
    <property type="match status" value="1"/>
</dbReference>
<dbReference type="Gene3D" id="3.40.50.300">
    <property type="entry name" value="P-loop containing nucleotide triphosphate hydrolases"/>
    <property type="match status" value="3"/>
</dbReference>
<dbReference type="Gene3D" id="3.90.1440.10">
    <property type="entry name" value="SecA, preprotein cross-linking domain"/>
    <property type="match status" value="1"/>
</dbReference>
<dbReference type="HAMAP" id="MF_01382">
    <property type="entry name" value="SecA"/>
    <property type="match status" value="1"/>
</dbReference>
<dbReference type="InterPro" id="IPR014001">
    <property type="entry name" value="Helicase_ATP-bd"/>
</dbReference>
<dbReference type="InterPro" id="IPR001650">
    <property type="entry name" value="Helicase_C-like"/>
</dbReference>
<dbReference type="InterPro" id="IPR027417">
    <property type="entry name" value="P-loop_NTPase"/>
</dbReference>
<dbReference type="InterPro" id="IPR004027">
    <property type="entry name" value="SEC_C_motif"/>
</dbReference>
<dbReference type="InterPro" id="IPR000185">
    <property type="entry name" value="SecA"/>
</dbReference>
<dbReference type="InterPro" id="IPR020937">
    <property type="entry name" value="SecA_CS"/>
</dbReference>
<dbReference type="InterPro" id="IPR011115">
    <property type="entry name" value="SecA_DEAD"/>
</dbReference>
<dbReference type="InterPro" id="IPR014018">
    <property type="entry name" value="SecA_motor_DEAD"/>
</dbReference>
<dbReference type="InterPro" id="IPR011130">
    <property type="entry name" value="SecA_preprotein_X-link_dom"/>
</dbReference>
<dbReference type="InterPro" id="IPR044722">
    <property type="entry name" value="SecA_SF2_C"/>
</dbReference>
<dbReference type="InterPro" id="IPR011116">
    <property type="entry name" value="SecA_Wing/Scaffold"/>
</dbReference>
<dbReference type="InterPro" id="IPR036266">
    <property type="entry name" value="SecA_Wing/Scaffold_sf"/>
</dbReference>
<dbReference type="InterPro" id="IPR036670">
    <property type="entry name" value="SecA_X-link_sf"/>
</dbReference>
<dbReference type="NCBIfam" id="TIGR00963">
    <property type="entry name" value="secA"/>
    <property type="match status" value="1"/>
</dbReference>
<dbReference type="PANTHER" id="PTHR30612:SF0">
    <property type="entry name" value="CHLOROPLAST PROTEIN-TRANSPORTING ATPASE"/>
    <property type="match status" value="1"/>
</dbReference>
<dbReference type="PANTHER" id="PTHR30612">
    <property type="entry name" value="SECA INNER MEMBRANE COMPONENT OF SEC PROTEIN SECRETION SYSTEM"/>
    <property type="match status" value="1"/>
</dbReference>
<dbReference type="Pfam" id="PF21090">
    <property type="entry name" value="P-loop_SecA"/>
    <property type="match status" value="2"/>
</dbReference>
<dbReference type="Pfam" id="PF02810">
    <property type="entry name" value="SEC-C"/>
    <property type="match status" value="1"/>
</dbReference>
<dbReference type="Pfam" id="PF07517">
    <property type="entry name" value="SecA_DEAD"/>
    <property type="match status" value="1"/>
</dbReference>
<dbReference type="Pfam" id="PF01043">
    <property type="entry name" value="SecA_PP_bind"/>
    <property type="match status" value="1"/>
</dbReference>
<dbReference type="Pfam" id="PF07516">
    <property type="entry name" value="SecA_SW"/>
    <property type="match status" value="1"/>
</dbReference>
<dbReference type="PRINTS" id="PR00906">
    <property type="entry name" value="SECA"/>
</dbReference>
<dbReference type="SMART" id="SM00957">
    <property type="entry name" value="SecA_DEAD"/>
    <property type="match status" value="1"/>
</dbReference>
<dbReference type="SMART" id="SM00958">
    <property type="entry name" value="SecA_PP_bind"/>
    <property type="match status" value="1"/>
</dbReference>
<dbReference type="SUPFAM" id="SSF81886">
    <property type="entry name" value="Helical scaffold and wing domains of SecA"/>
    <property type="match status" value="1"/>
</dbReference>
<dbReference type="SUPFAM" id="SSF52540">
    <property type="entry name" value="P-loop containing nucleoside triphosphate hydrolases"/>
    <property type="match status" value="2"/>
</dbReference>
<dbReference type="SUPFAM" id="SSF81767">
    <property type="entry name" value="Pre-protein crosslinking domain of SecA"/>
    <property type="match status" value="1"/>
</dbReference>
<dbReference type="PROSITE" id="PS01312">
    <property type="entry name" value="SECA"/>
    <property type="match status" value="1"/>
</dbReference>
<dbReference type="PROSITE" id="PS51196">
    <property type="entry name" value="SECA_MOTOR_DEAD"/>
    <property type="match status" value="1"/>
</dbReference>
<sequence length="1043" mass="119188">MLKFIEKIFGSKHDRDIKRLWPIVDEINEHFESYKSLSDEALRGKTQELKEQIKEHISDIEQSIITEKKQLENLELTIEEAESIQEKIEGIEKELHDATEEALNEVLPEAFAIVKETARRLVGKEYPVMGSTNIWNMVPYDVQLIGGIVLHQGKISEMATGEGKTLVAVLPTFLNALTGKGVHIVTVNDYLAQRDKEWMTPIFEFHGLTVGAILGNMPPYQRKEQYACDITYGTNNEFGFDYLRDNMAGDPEDVVQREFNYAIIDEVDSVLIDEARTPLIISGPVPNADVNKYNEIKPRVERLVRAQQNLVAKILTETEKAIKTPNKADKDAEFNIGLGLLRAKRGQPKNNKFIKLIGEPNAARFMQTVENEFLKDNARRMHEVDEELYFSIDEKNHTIELTEKGREFMTDTHEDPDFFVLPDVGTEISKIDSDATLSEQDKVQKKDELYRLFSVRSERIHNVSQLLRAFSLYTRDDEYVVQDGKVLIVDEFTGRILPGRRYSDGLHQALEAKEGVKIEGETQTMATITLQNFFRLYKKLAGMTGTAETEASEFFEIYKLDVVVIPTNKPIVRKDQEDLIFKTKREKYNAVINKIQELQEKGQPVLVGTTSVDVSETLSRMLKMKHIEHNVLNAKQHAREADVVANAGHKRAVTIATNMAGRGTDIKLGEGITEVGGLFILGTERHESRRIDRQLRGRAGRQGDPGTSVFYVSLEDDLMRLFGSDRVISVMDKLGHQEGDVIEHSMVTKSIERAQRRVEEQNFAIRKRLLEYDNVMNQQREVIYTRRRKALEKRRLRIEIFDLLRDYADKHAEKFYQALDKDGLEEQVLRELSVDIKLTVDAFEKLGEDGIADKIYNTAVDFYKRKEELLGNDIMAQIEKYSVLGVIDQKWREHLRDIDDLKEGINLRAYGQKDPLLEYKQEAFKLFVDLLEEISTETLSFAFKLFPQQAAERATFIPERSRVRQERLVAQHEVAQSAYATAAPAAETTTTAKAADAARQQPPAAENEEQKRQPVHVEKTPGRNDPCPCGSGKKYKHCHGRNA</sequence>
<accession>B3QXR7</accession>
<feature type="chain" id="PRO_1000144992" description="Protein translocase subunit SecA">
    <location>
        <begin position="1"/>
        <end position="1043"/>
    </location>
</feature>
<feature type="region of interest" description="Disordered" evidence="2">
    <location>
        <begin position="980"/>
        <end position="1043"/>
    </location>
</feature>
<feature type="compositionally biased region" description="Low complexity" evidence="2">
    <location>
        <begin position="980"/>
        <end position="1005"/>
    </location>
</feature>
<feature type="compositionally biased region" description="Basic and acidic residues" evidence="2">
    <location>
        <begin position="1008"/>
        <end position="1022"/>
    </location>
</feature>
<feature type="compositionally biased region" description="Basic residues" evidence="2">
    <location>
        <begin position="1033"/>
        <end position="1043"/>
    </location>
</feature>
<feature type="binding site" evidence="1">
    <location>
        <position position="143"/>
    </location>
    <ligand>
        <name>ATP</name>
        <dbReference type="ChEBI" id="CHEBI:30616"/>
    </ligand>
</feature>
<feature type="binding site" evidence="1">
    <location>
        <begin position="161"/>
        <end position="165"/>
    </location>
    <ligand>
        <name>ATP</name>
        <dbReference type="ChEBI" id="CHEBI:30616"/>
    </ligand>
</feature>
<feature type="binding site" evidence="1">
    <location>
        <position position="665"/>
    </location>
    <ligand>
        <name>ATP</name>
        <dbReference type="ChEBI" id="CHEBI:30616"/>
    </ligand>
</feature>
<feature type="binding site" evidence="1">
    <location>
        <position position="1027"/>
    </location>
    <ligand>
        <name>Zn(2+)</name>
        <dbReference type="ChEBI" id="CHEBI:29105"/>
    </ligand>
</feature>
<feature type="binding site" evidence="1">
    <location>
        <position position="1029"/>
    </location>
    <ligand>
        <name>Zn(2+)</name>
        <dbReference type="ChEBI" id="CHEBI:29105"/>
    </ligand>
</feature>
<feature type="binding site" evidence="1">
    <location>
        <position position="1038"/>
    </location>
    <ligand>
        <name>Zn(2+)</name>
        <dbReference type="ChEBI" id="CHEBI:29105"/>
    </ligand>
</feature>
<feature type="binding site" evidence="1">
    <location>
        <position position="1039"/>
    </location>
    <ligand>
        <name>Zn(2+)</name>
        <dbReference type="ChEBI" id="CHEBI:29105"/>
    </ligand>
</feature>
<evidence type="ECO:0000255" key="1">
    <source>
        <dbReference type="HAMAP-Rule" id="MF_01382"/>
    </source>
</evidence>
<evidence type="ECO:0000256" key="2">
    <source>
        <dbReference type="SAM" id="MobiDB-lite"/>
    </source>
</evidence>
<protein>
    <recommendedName>
        <fullName evidence="1">Protein translocase subunit SecA</fullName>
        <ecNumber evidence="1">7.4.2.8</ecNumber>
    </recommendedName>
</protein>
<comment type="function">
    <text evidence="1">Part of the Sec protein translocase complex. Interacts with the SecYEG preprotein conducting channel. Has a central role in coupling the hydrolysis of ATP to the transfer of proteins into and across the cell membrane, serving as an ATP-driven molecular motor driving the stepwise translocation of polypeptide chains across the membrane.</text>
</comment>
<comment type="catalytic activity">
    <reaction evidence="1">
        <text>ATP + H2O + cellular proteinSide 1 = ADP + phosphate + cellular proteinSide 2.</text>
        <dbReference type="EC" id="7.4.2.8"/>
    </reaction>
</comment>
<comment type="cofactor">
    <cofactor evidence="1">
        <name>Zn(2+)</name>
        <dbReference type="ChEBI" id="CHEBI:29105"/>
    </cofactor>
    <text evidence="1">May bind 1 zinc ion per subunit.</text>
</comment>
<comment type="subunit">
    <text evidence="1">Monomer and homodimer. Part of the essential Sec protein translocation apparatus which comprises SecA, SecYEG and auxiliary proteins SecDF. Other proteins may also be involved.</text>
</comment>
<comment type="subcellular location">
    <subcellularLocation>
        <location evidence="1">Cell inner membrane</location>
        <topology evidence="1">Peripheral membrane protein</topology>
        <orientation evidence="1">Cytoplasmic side</orientation>
    </subcellularLocation>
    <subcellularLocation>
        <location evidence="1">Cytoplasm</location>
    </subcellularLocation>
    <text evidence="1">Distribution is 50-50.</text>
</comment>
<comment type="similarity">
    <text evidence="1">Belongs to the SecA family.</text>
</comment>
<gene>
    <name evidence="1" type="primary">secA</name>
    <name type="ordered locus">Ctha_2533</name>
</gene>
<name>SECA_CHLT3</name>
<keyword id="KW-0067">ATP-binding</keyword>
<keyword id="KW-0997">Cell inner membrane</keyword>
<keyword id="KW-1003">Cell membrane</keyword>
<keyword id="KW-0963">Cytoplasm</keyword>
<keyword id="KW-0472">Membrane</keyword>
<keyword id="KW-0479">Metal-binding</keyword>
<keyword id="KW-0547">Nucleotide-binding</keyword>
<keyword id="KW-0653">Protein transport</keyword>
<keyword id="KW-1185">Reference proteome</keyword>
<keyword id="KW-1278">Translocase</keyword>
<keyword id="KW-0811">Translocation</keyword>
<keyword id="KW-0813">Transport</keyword>
<keyword id="KW-0862">Zinc</keyword>
<proteinExistence type="inferred from homology"/>